<evidence type="ECO:0000255" key="1">
    <source>
        <dbReference type="HAMAP-Rule" id="MF_00636"/>
    </source>
</evidence>
<accession>P0DG76</accession>
<accession>P67114</accession>
<accession>Q9A0R8</accession>
<feature type="chain" id="PRO_0000107773" description="Nucleotide-binding protein SpyM3_0462">
    <location>
        <begin position="1"/>
        <end position="296"/>
    </location>
</feature>
<feature type="binding site" evidence="1">
    <location>
        <begin position="13"/>
        <end position="20"/>
    </location>
    <ligand>
        <name>ATP</name>
        <dbReference type="ChEBI" id="CHEBI:30616"/>
    </ligand>
</feature>
<feature type="binding site" evidence="1">
    <location>
        <begin position="63"/>
        <end position="66"/>
    </location>
    <ligand>
        <name>GTP</name>
        <dbReference type="ChEBI" id="CHEBI:37565"/>
    </ligand>
</feature>
<dbReference type="EMBL" id="AE014074">
    <property type="protein sequence ID" value="AAM79069.1"/>
    <property type="molecule type" value="Genomic_DNA"/>
</dbReference>
<dbReference type="SMR" id="P0DG76"/>
<dbReference type="KEGG" id="spg:SpyM3_0462"/>
<dbReference type="HOGENOM" id="CLU_059558_0_0_9"/>
<dbReference type="Proteomes" id="UP000000564">
    <property type="component" value="Chromosome"/>
</dbReference>
<dbReference type="GO" id="GO:0005524">
    <property type="term" value="F:ATP binding"/>
    <property type="evidence" value="ECO:0007669"/>
    <property type="project" value="UniProtKB-UniRule"/>
</dbReference>
<dbReference type="GO" id="GO:0005525">
    <property type="term" value="F:GTP binding"/>
    <property type="evidence" value="ECO:0007669"/>
    <property type="project" value="UniProtKB-UniRule"/>
</dbReference>
<dbReference type="Gene3D" id="3.40.50.300">
    <property type="entry name" value="P-loop containing nucleotide triphosphate hydrolases"/>
    <property type="match status" value="1"/>
</dbReference>
<dbReference type="HAMAP" id="MF_00636">
    <property type="entry name" value="RapZ_like"/>
    <property type="match status" value="1"/>
</dbReference>
<dbReference type="InterPro" id="IPR027417">
    <property type="entry name" value="P-loop_NTPase"/>
</dbReference>
<dbReference type="InterPro" id="IPR005337">
    <property type="entry name" value="RapZ-like"/>
</dbReference>
<dbReference type="InterPro" id="IPR053930">
    <property type="entry name" value="RapZ-like_N"/>
</dbReference>
<dbReference type="InterPro" id="IPR053931">
    <property type="entry name" value="RapZ_C"/>
</dbReference>
<dbReference type="NCBIfam" id="NF003828">
    <property type="entry name" value="PRK05416.1"/>
    <property type="match status" value="1"/>
</dbReference>
<dbReference type="PANTHER" id="PTHR30448">
    <property type="entry name" value="RNASE ADAPTER PROTEIN RAPZ"/>
    <property type="match status" value="1"/>
</dbReference>
<dbReference type="PANTHER" id="PTHR30448:SF0">
    <property type="entry name" value="RNASE ADAPTER PROTEIN RAPZ"/>
    <property type="match status" value="1"/>
</dbReference>
<dbReference type="Pfam" id="PF22740">
    <property type="entry name" value="PapZ_C"/>
    <property type="match status" value="1"/>
</dbReference>
<dbReference type="Pfam" id="PF03668">
    <property type="entry name" value="RapZ-like_N"/>
    <property type="match status" value="1"/>
</dbReference>
<dbReference type="PIRSF" id="PIRSF005052">
    <property type="entry name" value="P-loopkin"/>
    <property type="match status" value="1"/>
</dbReference>
<dbReference type="SUPFAM" id="SSF52540">
    <property type="entry name" value="P-loop containing nucleoside triphosphate hydrolases"/>
    <property type="match status" value="1"/>
</dbReference>
<protein>
    <recommendedName>
        <fullName evidence="1">Nucleotide-binding protein SpyM3_0462</fullName>
    </recommendedName>
</protein>
<keyword id="KW-0067">ATP-binding</keyword>
<keyword id="KW-0342">GTP-binding</keyword>
<keyword id="KW-0547">Nucleotide-binding</keyword>
<proteinExistence type="inferred from homology"/>
<organism>
    <name type="scientific">Streptococcus pyogenes serotype M3 (strain ATCC BAA-595 / MGAS315)</name>
    <dbReference type="NCBI Taxonomy" id="198466"/>
    <lineage>
        <taxon>Bacteria</taxon>
        <taxon>Bacillati</taxon>
        <taxon>Bacillota</taxon>
        <taxon>Bacilli</taxon>
        <taxon>Lactobacillales</taxon>
        <taxon>Streptococcaceae</taxon>
        <taxon>Streptococcus</taxon>
    </lineage>
</organism>
<reference key="1">
    <citation type="journal article" date="2002" name="Proc. Natl. Acad. Sci. U.S.A.">
        <title>Genome sequence of a serotype M3 strain of group A Streptococcus: phage-encoded toxins, the high-virulence phenotype, and clone emergence.</title>
        <authorList>
            <person name="Beres S.B."/>
            <person name="Sylva G.L."/>
            <person name="Barbian K.D."/>
            <person name="Lei B."/>
            <person name="Hoff J.S."/>
            <person name="Mammarella N.D."/>
            <person name="Liu M.-Y."/>
            <person name="Smoot J.C."/>
            <person name="Porcella S.F."/>
            <person name="Parkins L.D."/>
            <person name="Campbell D.S."/>
            <person name="Smith T.M."/>
            <person name="McCormick J.K."/>
            <person name="Leung D.Y.M."/>
            <person name="Schlievert P.M."/>
            <person name="Musser J.M."/>
        </authorList>
    </citation>
    <scope>NUCLEOTIDE SEQUENCE [LARGE SCALE GENOMIC DNA]</scope>
    <source>
        <strain>ATCC BAA-595 / MGAS315</strain>
    </source>
</reference>
<sequence length="296" mass="33587">MSDKHINLVIVTGMSGAGKTVAIQSFEDLGYFTIDNMPPALVPKFLELIEQTNENRRVALVVDMRSRLFFKEINSTLDSIESNPSIDFRILFLDATDGELVSRYKETRRSHPLAADGRVLDGIRLERELLSPLKSMSQHVVDTTKLTPRQLRKTISDQFSEGSNQASFRIEVMSFGFKYGLPLDADLVFDVRFLPNPYYQVELREKTGLDEDVFNYVMSHPESEVFYKHLLNLIVPILPAYQKEGKSVLTVAIGCTGGQHRSVAFAHCLAESLATDWSVNESHRDQNRRKETVNRS</sequence>
<name>Y462_STRP3</name>
<comment type="function">
    <text evidence="1">Displays ATPase and GTPase activities.</text>
</comment>
<comment type="similarity">
    <text evidence="1">Belongs to the RapZ-like family.</text>
</comment>
<gene>
    <name type="ordered locus">SpyM3_0462</name>
</gene>